<sequence>MTIKSDKWIKKMSQEHNMIEPFEAGQVKVINNQKIVSYGTSSYGYDVRCADEFKIFTNINSSIVDPKNFNDKNFVDFKGDVCIIPPNSFALARTVEKFKIPRDTLVVCLGKSTYARCGIIVNVTPLEPEWEGYVTLEFSNTTPLPAKIYANEGVAQMLFFQSDEECETSYADKGGKYQGQVGVTLPKC</sequence>
<reference key="1">
    <citation type="journal article" date="2007" name="PLoS ONE">
        <title>Complete genomic characterization of a pathogenic A.II strain of Francisella tularensis subspecies tularensis.</title>
        <authorList>
            <person name="Beckstrom-Sternberg S.M."/>
            <person name="Auerbach R.K."/>
            <person name="Godbole S."/>
            <person name="Pearson J.V."/>
            <person name="Beckstrom-Sternberg J.S."/>
            <person name="Deng Z."/>
            <person name="Munk C."/>
            <person name="Kubota K."/>
            <person name="Zhou Y."/>
            <person name="Bruce D."/>
            <person name="Noronha J."/>
            <person name="Scheuermann R.H."/>
            <person name="Wang A."/>
            <person name="Wei X."/>
            <person name="Wang J."/>
            <person name="Hao J."/>
            <person name="Wagner D.M."/>
            <person name="Brettin T.S."/>
            <person name="Brown N."/>
            <person name="Gilna P."/>
            <person name="Keim P.S."/>
        </authorList>
    </citation>
    <scope>NUCLEOTIDE SEQUENCE [LARGE SCALE GENOMIC DNA]</scope>
    <source>
        <strain>WY96-3418</strain>
    </source>
</reference>
<evidence type="ECO:0000255" key="1">
    <source>
        <dbReference type="HAMAP-Rule" id="MF_00146"/>
    </source>
</evidence>
<feature type="chain" id="PRO_1000009729" description="dCTP deaminase">
    <location>
        <begin position="1"/>
        <end position="188"/>
    </location>
</feature>
<feature type="active site" description="Proton donor/acceptor" evidence="1">
    <location>
        <position position="137"/>
    </location>
</feature>
<feature type="binding site" evidence="1">
    <location>
        <begin position="111"/>
        <end position="116"/>
    </location>
    <ligand>
        <name>dCTP</name>
        <dbReference type="ChEBI" id="CHEBI:61481"/>
    </ligand>
</feature>
<feature type="binding site" evidence="1">
    <location>
        <begin position="135"/>
        <end position="137"/>
    </location>
    <ligand>
        <name>dCTP</name>
        <dbReference type="ChEBI" id="CHEBI:61481"/>
    </ligand>
</feature>
<feature type="binding site" evidence="1">
    <location>
        <position position="156"/>
    </location>
    <ligand>
        <name>dCTP</name>
        <dbReference type="ChEBI" id="CHEBI:61481"/>
    </ligand>
</feature>
<feature type="binding site" evidence="1">
    <location>
        <position position="170"/>
    </location>
    <ligand>
        <name>dCTP</name>
        <dbReference type="ChEBI" id="CHEBI:61481"/>
    </ligand>
</feature>
<feature type="binding site" evidence="1">
    <location>
        <position position="180"/>
    </location>
    <ligand>
        <name>dCTP</name>
        <dbReference type="ChEBI" id="CHEBI:61481"/>
    </ligand>
</feature>
<comment type="function">
    <text evidence="1">Catalyzes the deamination of dCTP to dUTP.</text>
</comment>
<comment type="catalytic activity">
    <reaction evidence="1">
        <text>dCTP + H2O + H(+) = dUTP + NH4(+)</text>
        <dbReference type="Rhea" id="RHEA:22680"/>
        <dbReference type="ChEBI" id="CHEBI:15377"/>
        <dbReference type="ChEBI" id="CHEBI:15378"/>
        <dbReference type="ChEBI" id="CHEBI:28938"/>
        <dbReference type="ChEBI" id="CHEBI:61481"/>
        <dbReference type="ChEBI" id="CHEBI:61555"/>
        <dbReference type="EC" id="3.5.4.13"/>
    </reaction>
</comment>
<comment type="pathway">
    <text evidence="1">Pyrimidine metabolism; dUMP biosynthesis; dUMP from dCTP (dUTP route): step 1/2.</text>
</comment>
<comment type="subunit">
    <text evidence="1">Homotrimer.</text>
</comment>
<comment type="similarity">
    <text evidence="1">Belongs to the dCTP deaminase family.</text>
</comment>
<protein>
    <recommendedName>
        <fullName evidence="1">dCTP deaminase</fullName>
        <ecNumber evidence="1">3.5.4.13</ecNumber>
    </recommendedName>
    <alternativeName>
        <fullName evidence="1">Deoxycytidine triphosphate deaminase</fullName>
    </alternativeName>
</protein>
<keyword id="KW-0378">Hydrolase</keyword>
<keyword id="KW-0546">Nucleotide metabolism</keyword>
<keyword id="KW-0547">Nucleotide-binding</keyword>
<name>DCD_FRATW</name>
<gene>
    <name evidence="1" type="primary">dcd</name>
    <name type="ordered locus">FTW_0900</name>
</gene>
<organism>
    <name type="scientific">Francisella tularensis subsp. tularensis (strain WY96-3418)</name>
    <dbReference type="NCBI Taxonomy" id="418136"/>
    <lineage>
        <taxon>Bacteria</taxon>
        <taxon>Pseudomonadati</taxon>
        <taxon>Pseudomonadota</taxon>
        <taxon>Gammaproteobacteria</taxon>
        <taxon>Thiotrichales</taxon>
        <taxon>Francisellaceae</taxon>
        <taxon>Francisella</taxon>
    </lineage>
</organism>
<proteinExistence type="inferred from homology"/>
<accession>A4IXU4</accession>
<dbReference type="EC" id="3.5.4.13" evidence="1"/>
<dbReference type="EMBL" id="CP000608">
    <property type="protein sequence ID" value="ABO46745.1"/>
    <property type="molecule type" value="Genomic_DNA"/>
</dbReference>
<dbReference type="RefSeq" id="WP_003016296.1">
    <property type="nucleotide sequence ID" value="NC_009257.1"/>
</dbReference>
<dbReference type="SMR" id="A4IXU4"/>
<dbReference type="GeneID" id="75265387"/>
<dbReference type="KEGG" id="ftw:FTW_0900"/>
<dbReference type="HOGENOM" id="CLU_087476_4_0_6"/>
<dbReference type="UniPathway" id="UPA00610">
    <property type="reaction ID" value="UER00665"/>
</dbReference>
<dbReference type="GO" id="GO:0008829">
    <property type="term" value="F:dCTP deaminase activity"/>
    <property type="evidence" value="ECO:0007669"/>
    <property type="project" value="UniProtKB-UniRule"/>
</dbReference>
<dbReference type="GO" id="GO:0000166">
    <property type="term" value="F:nucleotide binding"/>
    <property type="evidence" value="ECO:0007669"/>
    <property type="project" value="UniProtKB-KW"/>
</dbReference>
<dbReference type="GO" id="GO:0006226">
    <property type="term" value="P:dUMP biosynthetic process"/>
    <property type="evidence" value="ECO:0007669"/>
    <property type="project" value="UniProtKB-UniPathway"/>
</dbReference>
<dbReference type="GO" id="GO:0006229">
    <property type="term" value="P:dUTP biosynthetic process"/>
    <property type="evidence" value="ECO:0007669"/>
    <property type="project" value="UniProtKB-UniRule"/>
</dbReference>
<dbReference type="GO" id="GO:0015949">
    <property type="term" value="P:nucleobase-containing small molecule interconversion"/>
    <property type="evidence" value="ECO:0007669"/>
    <property type="project" value="TreeGrafter"/>
</dbReference>
<dbReference type="CDD" id="cd07557">
    <property type="entry name" value="trimeric_dUTPase"/>
    <property type="match status" value="1"/>
</dbReference>
<dbReference type="FunFam" id="2.70.40.10:FF:000001">
    <property type="entry name" value="dCTP deaminase"/>
    <property type="match status" value="1"/>
</dbReference>
<dbReference type="Gene3D" id="2.70.40.10">
    <property type="match status" value="1"/>
</dbReference>
<dbReference type="HAMAP" id="MF_00146">
    <property type="entry name" value="dCTP_deaminase"/>
    <property type="match status" value="1"/>
</dbReference>
<dbReference type="InterPro" id="IPR011962">
    <property type="entry name" value="dCTP_deaminase"/>
</dbReference>
<dbReference type="InterPro" id="IPR036157">
    <property type="entry name" value="dUTPase-like_sf"/>
</dbReference>
<dbReference type="InterPro" id="IPR033704">
    <property type="entry name" value="dUTPase_trimeric"/>
</dbReference>
<dbReference type="NCBIfam" id="TIGR02274">
    <property type="entry name" value="dCTP_deam"/>
    <property type="match status" value="1"/>
</dbReference>
<dbReference type="PANTHER" id="PTHR42680">
    <property type="entry name" value="DCTP DEAMINASE"/>
    <property type="match status" value="1"/>
</dbReference>
<dbReference type="PANTHER" id="PTHR42680:SF3">
    <property type="entry name" value="DCTP DEAMINASE"/>
    <property type="match status" value="1"/>
</dbReference>
<dbReference type="Pfam" id="PF22769">
    <property type="entry name" value="DCD"/>
    <property type="match status" value="1"/>
</dbReference>
<dbReference type="SUPFAM" id="SSF51283">
    <property type="entry name" value="dUTPase-like"/>
    <property type="match status" value="1"/>
</dbReference>